<evidence type="ECO:0000250" key="1">
    <source>
        <dbReference type="UniProtKB" id="P48449"/>
    </source>
</evidence>
<evidence type="ECO:0000255" key="2"/>
<evidence type="ECO:0000269" key="3">
    <source>
    </source>
</evidence>
<evidence type="ECO:0000269" key="4">
    <source>
    </source>
</evidence>
<evidence type="ECO:0000269" key="5">
    <source>
    </source>
</evidence>
<evidence type="ECO:0000269" key="6">
    <source>
    </source>
</evidence>
<evidence type="ECO:0000269" key="7">
    <source>
    </source>
</evidence>
<evidence type="ECO:0000269" key="8">
    <source>
    </source>
</evidence>
<evidence type="ECO:0000269" key="9">
    <source>
    </source>
</evidence>
<evidence type="ECO:0000269" key="10">
    <source ref="3"/>
</evidence>
<evidence type="ECO:0000269" key="11">
    <source ref="7"/>
</evidence>
<evidence type="ECO:0000303" key="12">
    <source>
    </source>
</evidence>
<evidence type="ECO:0000303" key="13">
    <source>
    </source>
</evidence>
<evidence type="ECO:0000303" key="14">
    <source>
    </source>
</evidence>
<evidence type="ECO:0000305" key="15"/>
<proteinExistence type="evidence at protein level"/>
<name>ERG7_YEAST</name>
<feature type="initiator methionine" description="Removed" evidence="9 11">
    <location>
        <position position="1"/>
    </location>
</feature>
<feature type="chain" id="PRO_0000072657" description="Lanosterol synthase ERG7">
    <location>
        <begin position="2"/>
        <end position="731"/>
    </location>
</feature>
<feature type="repeat" description="PFTB 1" evidence="2">
    <location>
        <begin position="125"/>
        <end position="167"/>
    </location>
</feature>
<feature type="repeat" description="PFTB 2" evidence="2">
    <location>
        <begin position="615"/>
        <end position="661"/>
    </location>
</feature>
<feature type="active site" description="Proton donor" evidence="1">
    <location>
        <position position="456"/>
    </location>
</feature>
<feature type="modified residue" description="N-acetylthreonine" evidence="11">
    <location>
        <position position="2"/>
    </location>
</feature>
<feature type="sequence variant" description="In strain: SGL9; loss of activity." evidence="10">
    <location>
        <begin position="359"/>
        <end position="731"/>
    </location>
</feature>
<feature type="mutagenesis site" description="Reduces thermal stability and enzyme activity; when associated with A-526 or C-526. No effect; when associated with D-526 or Q-526." evidence="7">
    <original>C</original>
    <variation>D</variation>
    <location>
        <position position="457"/>
    </location>
</feature>
<feature type="mutagenesis site" description="Reduces thermal stability and enzyme activity; when associated with D-457." evidence="7">
    <original>E</original>
    <variation>A</variation>
    <variation>C</variation>
    <location>
        <position position="526"/>
    </location>
</feature>
<feature type="mutagenesis site" description="No effect; when associated with D-457." evidence="7">
    <original>E</original>
    <variation>D</variation>
    <variation>Q</variation>
    <location>
        <position position="526"/>
    </location>
</feature>
<feature type="sequence conflict" description="In Ref. 1; AAA16975." evidence="15" ref="1">
    <original>H</original>
    <variation>N</variation>
    <location>
        <position position="61"/>
    </location>
</feature>
<feature type="sequence conflict" description="In Ref. 1; AAA16975 and 4; AAB68891." evidence="15" ref="1 4">
    <original>N</original>
    <variation>D</variation>
    <location>
        <position position="530"/>
    </location>
</feature>
<gene>
    <name evidence="14" type="primary">ERG7</name>
    <name type="ordered locus">YHR072W</name>
</gene>
<dbReference type="EC" id="5.4.99.7" evidence="4 8"/>
<dbReference type="EMBL" id="U04841">
    <property type="protein sequence ID" value="AAA16975.1"/>
    <property type="molecule type" value="Unassigned_DNA"/>
</dbReference>
<dbReference type="EMBL" id="U23488">
    <property type="protein sequence ID" value="AAA64377.1"/>
    <property type="molecule type" value="Genomic_DNA"/>
</dbReference>
<dbReference type="EMBL" id="U60996">
    <property type="protein sequence ID" value="AAB08472.1"/>
    <property type="molecule type" value="Genomic_DNA"/>
</dbReference>
<dbReference type="EMBL" id="U10556">
    <property type="protein sequence ID" value="AAB68891.1"/>
    <property type="molecule type" value="Genomic_DNA"/>
</dbReference>
<dbReference type="EMBL" id="AY693043">
    <property type="protein sequence ID" value="AAT93062.1"/>
    <property type="molecule type" value="Genomic_DNA"/>
</dbReference>
<dbReference type="EMBL" id="BK006934">
    <property type="protein sequence ID" value="DAA06765.2"/>
    <property type="molecule type" value="Genomic_DNA"/>
</dbReference>
<dbReference type="PIR" id="S46813">
    <property type="entry name" value="S46813"/>
</dbReference>
<dbReference type="RefSeq" id="NP_011939.2">
    <property type="nucleotide sequence ID" value="NM_001179202.2"/>
</dbReference>
<dbReference type="SMR" id="P38604"/>
<dbReference type="BioGRID" id="36505">
    <property type="interactions" value="290"/>
</dbReference>
<dbReference type="DIP" id="DIP-8319N"/>
<dbReference type="FunCoup" id="P38604">
    <property type="interactions" value="179"/>
</dbReference>
<dbReference type="IntAct" id="P38604">
    <property type="interactions" value="19"/>
</dbReference>
<dbReference type="MINT" id="P38604"/>
<dbReference type="STRING" id="4932.YHR072W"/>
<dbReference type="BindingDB" id="P38604"/>
<dbReference type="ChEMBL" id="CHEMBL5355"/>
<dbReference type="iPTMnet" id="P38604"/>
<dbReference type="PaxDb" id="4932-YHR072W"/>
<dbReference type="PeptideAtlas" id="P38604"/>
<dbReference type="EnsemblFungi" id="YHR072W_mRNA">
    <property type="protein sequence ID" value="YHR072W"/>
    <property type="gene ID" value="YHR072W"/>
</dbReference>
<dbReference type="GeneID" id="856470"/>
<dbReference type="KEGG" id="sce:YHR072W"/>
<dbReference type="AGR" id="SGD:S000001114"/>
<dbReference type="SGD" id="S000001114">
    <property type="gene designation" value="ERG7"/>
</dbReference>
<dbReference type="VEuPathDB" id="FungiDB:YHR072W"/>
<dbReference type="eggNOG" id="KOG0497">
    <property type="taxonomic scope" value="Eukaryota"/>
</dbReference>
<dbReference type="GeneTree" id="ENSGT00390000011570"/>
<dbReference type="HOGENOM" id="CLU_009074_2_1_1"/>
<dbReference type="InParanoid" id="P38604"/>
<dbReference type="OMA" id="CWARQTI"/>
<dbReference type="OrthoDB" id="21502at2759"/>
<dbReference type="BioCyc" id="MetaCyc:YHR072W-MONOMER"/>
<dbReference type="BioCyc" id="YEAST:YHR072W-MONOMER"/>
<dbReference type="Reactome" id="R-SCE-191273">
    <property type="pathway name" value="Cholesterol biosynthesis"/>
</dbReference>
<dbReference type="SABIO-RK" id="P38604"/>
<dbReference type="UniPathway" id="UPA00767">
    <property type="reaction ID" value="UER00753"/>
</dbReference>
<dbReference type="BioGRID-ORCS" id="856470">
    <property type="hits" value="6 hits in 10 CRISPR screens"/>
</dbReference>
<dbReference type="PRO" id="PR:P38604"/>
<dbReference type="Proteomes" id="UP000002311">
    <property type="component" value="Chromosome VIII"/>
</dbReference>
<dbReference type="RNAct" id="P38604">
    <property type="molecule type" value="protein"/>
</dbReference>
<dbReference type="GO" id="GO:0005789">
    <property type="term" value="C:endoplasmic reticulum membrane"/>
    <property type="evidence" value="ECO:0007669"/>
    <property type="project" value="UniProtKB-SubCell"/>
</dbReference>
<dbReference type="GO" id="GO:0005811">
    <property type="term" value="C:lipid droplet"/>
    <property type="evidence" value="ECO:0000314"/>
    <property type="project" value="SGD"/>
</dbReference>
<dbReference type="GO" id="GO:0000250">
    <property type="term" value="F:lanosterol synthase activity"/>
    <property type="evidence" value="ECO:0000314"/>
    <property type="project" value="UniProt"/>
</dbReference>
<dbReference type="GO" id="GO:0006696">
    <property type="term" value="P:ergosterol biosynthetic process"/>
    <property type="evidence" value="ECO:0000314"/>
    <property type="project" value="UniProt"/>
</dbReference>
<dbReference type="GO" id="GO:0016104">
    <property type="term" value="P:triterpenoid biosynthetic process"/>
    <property type="evidence" value="ECO:0007669"/>
    <property type="project" value="InterPro"/>
</dbReference>
<dbReference type="CDD" id="cd02892">
    <property type="entry name" value="SQCY_1"/>
    <property type="match status" value="1"/>
</dbReference>
<dbReference type="FunFam" id="1.50.10.20:FF:000003">
    <property type="entry name" value="Terpene cyclase/mutase family member"/>
    <property type="match status" value="1"/>
</dbReference>
<dbReference type="FunFam" id="1.50.10.20:FF:000027">
    <property type="entry name" value="Terpene cyclase/mutase family member"/>
    <property type="match status" value="1"/>
</dbReference>
<dbReference type="Gene3D" id="1.50.10.20">
    <property type="match status" value="2"/>
</dbReference>
<dbReference type="InterPro" id="IPR032696">
    <property type="entry name" value="SQ_cyclase_C"/>
</dbReference>
<dbReference type="InterPro" id="IPR032697">
    <property type="entry name" value="SQ_cyclase_N"/>
</dbReference>
<dbReference type="InterPro" id="IPR018333">
    <property type="entry name" value="Squalene_cyclase"/>
</dbReference>
<dbReference type="InterPro" id="IPR002365">
    <property type="entry name" value="Terpene_synthase_CS"/>
</dbReference>
<dbReference type="InterPro" id="IPR008930">
    <property type="entry name" value="Terpenoid_cyclase/PrenylTrfase"/>
</dbReference>
<dbReference type="NCBIfam" id="TIGR01787">
    <property type="entry name" value="squalene_cyclas"/>
    <property type="match status" value="1"/>
</dbReference>
<dbReference type="PANTHER" id="PTHR11764:SF20">
    <property type="entry name" value="LANOSTEROL SYNTHASE"/>
    <property type="match status" value="1"/>
</dbReference>
<dbReference type="PANTHER" id="PTHR11764">
    <property type="entry name" value="TERPENE CYCLASE/MUTASE FAMILY MEMBER"/>
    <property type="match status" value="1"/>
</dbReference>
<dbReference type="Pfam" id="PF13243">
    <property type="entry name" value="SQHop_cyclase_C"/>
    <property type="match status" value="1"/>
</dbReference>
<dbReference type="Pfam" id="PF13249">
    <property type="entry name" value="SQHop_cyclase_N"/>
    <property type="match status" value="1"/>
</dbReference>
<dbReference type="SFLD" id="SFLDG01016">
    <property type="entry name" value="Prenyltransferase_Like_2"/>
    <property type="match status" value="1"/>
</dbReference>
<dbReference type="SUPFAM" id="SSF48239">
    <property type="entry name" value="Terpenoid cyclases/Protein prenyltransferases"/>
    <property type="match status" value="2"/>
</dbReference>
<dbReference type="PROSITE" id="PS01074">
    <property type="entry name" value="TERPENE_SYNTHASES"/>
    <property type="match status" value="1"/>
</dbReference>
<keyword id="KW-0007">Acetylation</keyword>
<keyword id="KW-0903">Direct protein sequencing</keyword>
<keyword id="KW-0256">Endoplasmic reticulum</keyword>
<keyword id="KW-0413">Isomerase</keyword>
<keyword id="KW-0444">Lipid biosynthesis</keyword>
<keyword id="KW-0551">Lipid droplet</keyword>
<keyword id="KW-0443">Lipid metabolism</keyword>
<keyword id="KW-0472">Membrane</keyword>
<keyword id="KW-1185">Reference proteome</keyword>
<keyword id="KW-0677">Repeat</keyword>
<keyword id="KW-0752">Steroid biosynthesis</keyword>
<keyword id="KW-0753">Steroid metabolism</keyword>
<keyword id="KW-0756">Sterol biosynthesis</keyword>
<keyword id="KW-1207">Sterol metabolism</keyword>
<protein>
    <recommendedName>
        <fullName evidence="14">Lanosterol synthase ERG7</fullName>
        <ecNumber evidence="4 8">5.4.99.7</ecNumber>
    </recommendedName>
    <alternativeName>
        <fullName evidence="12">2,3-epoxysqualene--lanosterol cyclase ERG7</fullName>
    </alternativeName>
    <alternativeName>
        <fullName evidence="14">Ergosterol biosynthetic protein 7</fullName>
    </alternativeName>
    <alternativeName>
        <fullName evidence="12">Oxidosqualene--lanosterol cyclase ERG7</fullName>
        <shortName evidence="12">OSC</shortName>
    </alternativeName>
</protein>
<accession>P38604</accession>
<accession>D3DL21</accession>
<accession>Q92327</accession>
<comment type="function">
    <text evidence="4 7 8 13">Lanosterol synthase; part of the third module of ergosterol biosynthesis pathway that includes the late steps of the pathway (PubMed:12842197, PubMed:16235265, PubMed:1731628). ERG7 catalyzes the cyclization of (S)-2,3 oxidosqualene to lanosterol, a reaction that forms the sterol core (PubMed:12842197, PubMed:1731628). The third module or late pathway involves the ergosterol synthesis itself through consecutive reactions that mainly occur in the endoplasmic reticulum (ER) membrane. Firstly, the squalene synthase ERG9 catalyzes the condensation of 2 farnesyl pyrophosphate moieties to form squalene, which is the precursor of all steroids. Squalene synthase is crucial for balancing the incorporation of farnesyl diphosphate (FPP) into sterol and nonsterol isoprene synthesis. Secondly, the squalene epoxidase ERG1 catalyzes the stereospecific oxidation of squalene to (S)-2,3-epoxysqualene, which is considered to be a rate-limiting enzyme in steroid biosynthesis. Then, the lanosterol synthase ERG7 catalyzes the cyclization of (S)-2,3 oxidosqualene to lanosterol, a reaction that forms the sterol core. In the next steps, lanosterol is transformed to zymosterol through a complex process involving various demethylation, reduction and desaturation reactions. The lanosterol 14-alpha-demethylase ERG11 (also known as CYP51) catalyzes C14-demethylation of lanosterol to produce 4,4'-dimethyl cholesta-8,14,24-triene-3-beta-ol, which is critical for ergosterol biosynthesis. The C-14 reductase ERG24 reduces the C14=C15 double bond of 4,4-dimethyl-cholesta-8,14,24-trienol to produce 4,4-dimethyl-cholesta-8,24-dienol. 4,4-dimethyl-cholesta-8,24-dienol is substrate of the C-4 demethylation complex ERG25-ERG26-ERG27 in which ERG25 catalyzes the three-step monooxygenation required for the demethylation of 4,4-dimethyl and 4alpha-methylsterols, ERG26 catalyzes the oxidative decarboxylation that results in a reduction of the 3-beta-hydroxy group at the C-3 carbon to an oxo group, and ERG27 is responsible for the reduction of the keto group on the C-3. ERG28 has a role as a scaffold to help anchor ERG25, ERG26 and ERG27 to the endoplasmic reticulum and ERG29 regulates the activity of the iron-containing C4-methylsterol oxidase ERG25. Then, the sterol 24-C-methyltransferase ERG6 catalyzes the methyl transfer from S-adenosyl-methionine to the C-24 of zymosterol to form fecosterol. The C-8 sterol isomerase ERG2 catalyzes the reaction which results in unsaturation at C-7 in the B ring of sterols and thus converts fecosterol to episterol. The sterol-C5-desaturase ERG3 then catalyzes the introduction of a C-5 double bond in the B ring to produce 5-dehydroepisterol. The C-22 sterol desaturase ERG5 further converts 5-dehydroepisterol into ergosta-5,7,22,24(28)-tetraen-3beta-ol by forming the C-22(23) double bond in the sterol side chain. Finally, ergosta-5,7,22,24(28)-tetraen-3beta-ol is substrate of the C-24(28) sterol reductase ERG4 to produce ergosterol (PubMed:32679672).</text>
</comment>
<comment type="catalytic activity">
    <reaction evidence="4 8">
        <text>(S)-2,3-epoxysqualene = lanosterol</text>
        <dbReference type="Rhea" id="RHEA:14621"/>
        <dbReference type="ChEBI" id="CHEBI:15441"/>
        <dbReference type="ChEBI" id="CHEBI:16521"/>
        <dbReference type="EC" id="5.4.99.7"/>
    </reaction>
    <physiologicalReaction direction="left-to-right" evidence="4 8">
        <dbReference type="Rhea" id="RHEA:14622"/>
    </physiologicalReaction>
</comment>
<comment type="activity regulation">
    <text evidence="4">Catalytic activity requires the presence of ERG27.</text>
</comment>
<comment type="biophysicochemical properties">
    <phDependence>
        <text evidence="8">Optimum pH is 7.</text>
    </phDependence>
    <temperatureDependence>
        <text evidence="8">Optimum temperature is 35 degrees Celsius.</text>
    </temperatureDependence>
</comment>
<comment type="pathway">
    <text evidence="4 8">Terpene metabolism; lanosterol biosynthesis; lanosterol from farnesyl diphosphate: step 3/3.</text>
</comment>
<comment type="interaction">
    <interactant intactId="EBI-6572">
        <id>P38604</id>
    </interactant>
    <interactant intactId="EBI-38132">
        <id>Q12452</id>
        <label>ERG27</label>
    </interactant>
    <organismsDiffer>false</organismsDiffer>
    <experiments>5</experiments>
</comment>
<comment type="subcellular location">
    <subcellularLocation>
        <location evidence="3">Lipid droplet</location>
    </subcellularLocation>
    <subcellularLocation>
        <location evidence="3 5">Endoplasmic reticulum membrane</location>
        <topology evidence="3">Peripheral membrane protein</topology>
    </subcellularLocation>
    <text evidence="3">Predominantly in lipid particles.</text>
</comment>
<comment type="miscellaneous">
    <text evidence="6">Present with 2193 molecules/cell in log phase SD medium.</text>
</comment>
<comment type="similarity">
    <text evidence="15">Belongs to the terpene cyclase/mutase family.</text>
</comment>
<sequence>MTEFYSDTIGLPKTDPRLWRLRTDELGRESWEYLTPQQAANDPPSTFTQWLLQDPKFPQPHPERNKHSPDFSAFDACHNGASFFKLLQEPDSGIFPCQYKGPMFMTIGYVAVNYIAGIEIPEHERIELIRYIVNTAHPVDGGWGLHSVDKSTVFGTVLNYVILRLLGLPKDHPVCAKARSTLLRLGGAIGSPHWGKIWLSALNLYKWEGVNPAPPETWLLPYSLPMHPGRWWVHTRGVYIPVSYLSLVKFSCPMTPLLEELRNEIYTKPFDKINFSKNRNTVCGVDLYYPHSTTLNIANSLVVFYEKYLRNRFIYSLSKKKVYDLIKTELQNTDSLCIAPVNQAFCALVTLIEEGVDSEAFQRLQYRFKDALFHGPQGMTIMGTNGVQTWDCAFAIQYFFVAGLAERPEFYNTIVSAYKFLCHAQFDTECVPGSYRDKRKGAWGFSTKTQGYTVADCTAEAIKAIIMVKNSPVFSEVHHMISSERLFEGIDVLLNLQNIGSFEYGSFATYEKIKAPLAMETLNPAEVFGNIMVEYPYVECTDSSVLGLTYFHKYFDYRKEEIRTRIRIAIEFIKKSQLPDGSWYGSWGICFTYAGMFALEALHTVGETYENSSTVRKGCDFLVSKQMKDGGWGESMKSSELHSYVDSEKSLVVQTAWALIALLFAEYPNKEVIDRGIDLLKNRQEESGEWKFESVEGVFNHSCAIEYPSYRFLFPIKALGMYSRAYETHTL</sequence>
<organism>
    <name type="scientific">Saccharomyces cerevisiae (strain ATCC 204508 / S288c)</name>
    <name type="common">Baker's yeast</name>
    <dbReference type="NCBI Taxonomy" id="559292"/>
    <lineage>
        <taxon>Eukaryota</taxon>
        <taxon>Fungi</taxon>
        <taxon>Dikarya</taxon>
        <taxon>Ascomycota</taxon>
        <taxon>Saccharomycotina</taxon>
        <taxon>Saccharomycetes</taxon>
        <taxon>Saccharomycetales</taxon>
        <taxon>Saccharomycetaceae</taxon>
        <taxon>Saccharomyces</taxon>
    </lineage>
</organism>
<reference key="1">
    <citation type="journal article" date="1994" name="Proc. Natl. Acad. Sci. U.S.A.">
        <title>Molecular cloning, characterization, and overexpression of ERG7, the Saccharomyces cerevisiae gene encoding lanosterol synthase.</title>
        <authorList>
            <person name="Corey E.J."/>
            <person name="Matsuda S.P.T."/>
            <person name="Bartel B."/>
        </authorList>
    </citation>
    <scope>NUCLEOTIDE SEQUENCE</scope>
    <scope>PROTEIN SEQUENCE OF 2-9</scope>
</reference>
<reference key="2">
    <citation type="journal article" date="1994" name="Proc. Natl. Acad. Sci. U.S.A.">
        <title>Isolation and characterization of the gene encoding 2,3-oxidosqualene-lanosterol cyclase from Saccharomyces cerevisiae.</title>
        <authorList>
            <person name="Shi Z."/>
            <person name="Buntel C.J."/>
            <person name="Griffin J.H."/>
        </authorList>
    </citation>
    <scope>NUCLEOTIDE SEQUENCE [GENOMIC DNA]</scope>
</reference>
<reference key="3">
    <citation type="submission" date="1996-06" db="EMBL/GenBank/DDBJ databases">
        <title>Mutations in the oxidosqualene-lanosterol cyclase gene of Saccharomyces cerevisiae.</title>
        <authorList>
            <person name="Griffin J.H."/>
            <person name="Buntel C.J."/>
            <person name="Siregar J.J."/>
        </authorList>
    </citation>
    <scope>NUCLEOTIDE SEQUENCE [GENOMIC DNA]</scope>
    <scope>VARIANT 359-GLU--LEU-731 DEL</scope>
    <source>
        <strain>SGL9</strain>
    </source>
</reference>
<reference key="4">
    <citation type="journal article" date="1994" name="Science">
        <title>Complete nucleotide sequence of Saccharomyces cerevisiae chromosome VIII.</title>
        <authorList>
            <person name="Johnston M."/>
            <person name="Andrews S."/>
            <person name="Brinkman R."/>
            <person name="Cooper J."/>
            <person name="Ding H."/>
            <person name="Dover J."/>
            <person name="Du Z."/>
            <person name="Favello A."/>
            <person name="Fulton L."/>
            <person name="Gattung S."/>
            <person name="Geisel C."/>
            <person name="Kirsten J."/>
            <person name="Kucaba T."/>
            <person name="Hillier L.W."/>
            <person name="Jier M."/>
            <person name="Johnston L."/>
            <person name="Langston Y."/>
            <person name="Latreille P."/>
            <person name="Louis E.J."/>
            <person name="Macri C."/>
            <person name="Mardis E."/>
            <person name="Menezes S."/>
            <person name="Mouser L."/>
            <person name="Nhan M."/>
            <person name="Rifkin L."/>
            <person name="Riles L."/>
            <person name="St Peter H."/>
            <person name="Trevaskis E."/>
            <person name="Vaughan K."/>
            <person name="Vignati D."/>
            <person name="Wilcox L."/>
            <person name="Wohldman P."/>
            <person name="Waterston R."/>
            <person name="Wilson R."/>
            <person name="Vaudin M."/>
        </authorList>
    </citation>
    <scope>NUCLEOTIDE SEQUENCE [LARGE SCALE GENOMIC DNA]</scope>
    <source>
        <strain>ATCC 204508 / S288c</strain>
    </source>
</reference>
<reference key="5">
    <citation type="journal article" date="2014" name="G3 (Bethesda)">
        <title>The reference genome sequence of Saccharomyces cerevisiae: Then and now.</title>
        <authorList>
            <person name="Engel S.R."/>
            <person name="Dietrich F.S."/>
            <person name="Fisk D.G."/>
            <person name="Binkley G."/>
            <person name="Balakrishnan R."/>
            <person name="Costanzo M.C."/>
            <person name="Dwight S.S."/>
            <person name="Hitz B.C."/>
            <person name="Karra K."/>
            <person name="Nash R.S."/>
            <person name="Weng S."/>
            <person name="Wong E.D."/>
            <person name="Lloyd P."/>
            <person name="Skrzypek M.S."/>
            <person name="Miyasato S.R."/>
            <person name="Simison M."/>
            <person name="Cherry J.M."/>
        </authorList>
    </citation>
    <scope>GENOME REANNOTATION</scope>
    <scope>SEQUENCE REVISION TO 530</scope>
    <source>
        <strain>ATCC 204508 / S288c</strain>
    </source>
</reference>
<reference key="6">
    <citation type="journal article" date="2007" name="Genome Res.">
        <title>Approaching a complete repository of sequence-verified protein-encoding clones for Saccharomyces cerevisiae.</title>
        <authorList>
            <person name="Hu Y."/>
            <person name="Rolfs A."/>
            <person name="Bhullar B."/>
            <person name="Murthy T.V.S."/>
            <person name="Zhu C."/>
            <person name="Berger M.F."/>
            <person name="Camargo A.A."/>
            <person name="Kelley F."/>
            <person name="McCarron S."/>
            <person name="Jepson D."/>
            <person name="Richardson A."/>
            <person name="Raphael J."/>
            <person name="Moreira D."/>
            <person name="Taycher E."/>
            <person name="Zuo D."/>
            <person name="Mohr S."/>
            <person name="Kane M.F."/>
            <person name="Williamson J."/>
            <person name="Simpson A.J.G."/>
            <person name="Bulyk M.L."/>
            <person name="Harlow E."/>
            <person name="Marsischky G."/>
            <person name="Kolodner R.D."/>
            <person name="LaBaer J."/>
        </authorList>
    </citation>
    <scope>NUCLEOTIDE SEQUENCE [GENOMIC DNA]</scope>
    <source>
        <strain>ATCC 204508 / S288c</strain>
    </source>
</reference>
<reference key="7">
    <citation type="submission" date="2005-06" db="UniProtKB">
        <authorList>
            <person name="Bienvenut W.V."/>
            <person name="Peters C."/>
        </authorList>
    </citation>
    <scope>PROTEIN SEQUENCE OF 2-13</scope>
    <scope>CLEAVAGE OF INITIATOR METHIONINE</scope>
    <scope>ACETYLATION AT THR-2</scope>
    <scope>IDENTIFICATION BY MASS SPECTROMETRY</scope>
</reference>
<reference key="8">
    <citation type="journal article" date="1992" name="Arch. Biochem. Biophys.">
        <title>Characterization and partial purification of squalene-2,3-oxide cyclase from Saccharomyces cerevisiae.</title>
        <authorList>
            <person name="Balliano G."/>
            <person name="Viola F."/>
            <person name="Ceruti M."/>
            <person name="Cattel L."/>
        </authorList>
    </citation>
    <scope>FUNCTION</scope>
    <scope>CATALYTIC ACTIVITY</scope>
    <scope>BIOPHYSICOCHEMICAL PROPERTIES</scope>
</reference>
<reference key="9">
    <citation type="journal article" date="2002" name="J. Biol. Chem.">
        <title>Yeast oxidosqualene cyclase (Erg7p) is a major component of lipid particles.</title>
        <authorList>
            <person name="Milla P."/>
            <person name="Athenstaedt K."/>
            <person name="Viola F."/>
            <person name="Oliaro-Bosso S."/>
            <person name="Kohlwein S.D."/>
            <person name="Daum G."/>
            <person name="Balliano G."/>
        </authorList>
    </citation>
    <scope>SUBCELLULAR LOCATION</scope>
</reference>
<reference key="10">
    <citation type="journal article" date="2003" name="Biochim. Biophys. Acta">
        <title>In yeast sterol biosynthesis the 3-keto reductase protein (Erg27p) is required for oxidosqualene cyclase (Erg7p) activity.</title>
        <authorList>
            <person name="Mo C."/>
            <person name="Milla P."/>
            <person name="Athenstaedt K."/>
            <person name="Ott R."/>
            <person name="Balliano G."/>
            <person name="Daum G."/>
            <person name="Bard M."/>
        </authorList>
    </citation>
    <scope>FUNCTION</scope>
    <scope>CATALYTIC ACTIVITY</scope>
    <scope>ACTIVITY REGULATION</scope>
</reference>
<reference key="11">
    <citation type="journal article" date="2003" name="Nature">
        <title>Global analysis of protein localization in budding yeast.</title>
        <authorList>
            <person name="Huh W.-K."/>
            <person name="Falvo J.V."/>
            <person name="Gerke L.C."/>
            <person name="Carroll A.S."/>
            <person name="Howson R.W."/>
            <person name="Weissman J.S."/>
            <person name="O'Shea E.K."/>
        </authorList>
    </citation>
    <scope>SUBCELLULAR LOCATION [LARGE SCALE ANALYSIS]</scope>
</reference>
<reference key="12">
    <citation type="journal article" date="2003" name="Nature">
        <title>Global analysis of protein expression in yeast.</title>
        <authorList>
            <person name="Ghaemmaghami S."/>
            <person name="Huh W.-K."/>
            <person name="Bower K."/>
            <person name="Howson R.W."/>
            <person name="Belle A."/>
            <person name="Dephoure N."/>
            <person name="O'Shea E.K."/>
            <person name="Weissman J.S."/>
        </authorList>
    </citation>
    <scope>LEVEL OF PROTEIN EXPRESSION [LARGE SCALE ANALYSIS]</scope>
</reference>
<reference key="13">
    <citation type="journal article" date="2005" name="ChemBioChem">
        <title>Access of the substrate to the active site of yeast oxidosqualene cyclase: an inhibition and site-directed mutagenesis approach.</title>
        <authorList>
            <person name="Oliaro-Bosso S."/>
            <person name="Schulz-Gasch T."/>
            <person name="Balliano G."/>
            <person name="Viola F."/>
        </authorList>
    </citation>
    <scope>FUNCTION</scope>
    <scope>MUTAGENESIS OF CYS-457 AND GLU-526</scope>
</reference>
<reference key="14">
    <citation type="journal article" date="2012" name="Proc. Natl. Acad. Sci. U.S.A.">
        <title>N-terminal acetylome analyses and functional insights of the N-terminal acetyltransferase NatB.</title>
        <authorList>
            <person name="Van Damme P."/>
            <person name="Lasa M."/>
            <person name="Polevoda B."/>
            <person name="Gazquez C."/>
            <person name="Elosegui-Artola A."/>
            <person name="Kim D.S."/>
            <person name="De Juan-Pardo E."/>
            <person name="Demeyer K."/>
            <person name="Hole K."/>
            <person name="Larrea E."/>
            <person name="Timmerman E."/>
            <person name="Prieto J."/>
            <person name="Arnesen T."/>
            <person name="Sherman F."/>
            <person name="Gevaert K."/>
            <person name="Aldabe R."/>
        </authorList>
    </citation>
    <scope>IDENTIFICATION BY MASS SPECTROMETRY [LARGE SCALE ANALYSIS]</scope>
</reference>
<reference key="15">
    <citation type="journal article" date="2020" name="Genes (Basel)">
        <title>Regulation of ergosterol biosynthesis in Saccharomyces cerevisiae.</title>
        <authorList>
            <person name="Jorda T."/>
            <person name="Puig S."/>
        </authorList>
    </citation>
    <scope>REVIEW ON ERGOSTEROL BIOSYNTHESIS</scope>
</reference>